<accession>P81246</accession>
<evidence type="ECO:0000250" key="1">
    <source>
        <dbReference type="UniProtKB" id="P11598"/>
    </source>
</evidence>
<evidence type="ECO:0000250" key="2">
    <source>
        <dbReference type="UniProtKB" id="P27773"/>
    </source>
</evidence>
<evidence type="ECO:0000250" key="3">
    <source>
        <dbReference type="UniProtKB" id="P30101"/>
    </source>
</evidence>
<evidence type="ECO:0000305" key="4"/>
<keyword id="KW-1064">Adaptive immunity</keyword>
<keyword id="KW-0903">Direct protein sequencing</keyword>
<keyword id="KW-1015">Disulfide bond</keyword>
<keyword id="KW-0256">Endoplasmic reticulum</keyword>
<keyword id="KW-0391">Immunity</keyword>
<keyword id="KW-0413">Isomerase</keyword>
<keyword id="KW-0676">Redox-active center</keyword>
<feature type="chain" id="PRO_0000120176" description="Protein disulfide-isomerase A3">
    <location>
        <begin position="1"/>
        <end position="39" status="greater than"/>
    </location>
</feature>
<feature type="non-consecutive residues" evidence="4">
    <location>
        <begin position="22"/>
        <end position="23"/>
    </location>
</feature>
<feature type="non-consecutive residues" evidence="4">
    <location>
        <begin position="29"/>
        <end position="30"/>
    </location>
</feature>
<feature type="non-terminal residue">
    <location>
        <position position="39"/>
    </location>
</feature>
<name>PDIA3_PAPHA</name>
<protein>
    <recommendedName>
        <fullName>Protein disulfide-isomerase A3</fullName>
        <ecNumber evidence="3">5.3.4.1</ecNumber>
    </recommendedName>
    <alternativeName>
        <fullName>58 kDa glucose-regulated protein</fullName>
    </alternativeName>
    <alternativeName>
        <fullName>58 kDa microsomal protein</fullName>
        <shortName>p58</shortName>
    </alternativeName>
</protein>
<proteinExistence type="evidence at protein level"/>
<organism>
    <name type="scientific">Papio hamadryas</name>
    <name type="common">Hamadryas baboon</name>
    <dbReference type="NCBI Taxonomy" id="9557"/>
    <lineage>
        <taxon>Eukaryota</taxon>
        <taxon>Metazoa</taxon>
        <taxon>Chordata</taxon>
        <taxon>Craniata</taxon>
        <taxon>Vertebrata</taxon>
        <taxon>Euteleostomi</taxon>
        <taxon>Mammalia</taxon>
        <taxon>Eutheria</taxon>
        <taxon>Euarchontoglires</taxon>
        <taxon>Primates</taxon>
        <taxon>Haplorrhini</taxon>
        <taxon>Catarrhini</taxon>
        <taxon>Cercopithecidae</taxon>
        <taxon>Cercopithecinae</taxon>
        <taxon>Papio</taxon>
    </lineage>
</organism>
<comment type="function">
    <text evidence="3">Protein disulfide isomerase that catalyzes the formation, isomerization, and reduction or oxidation of disulfide bonds in client proteins and functions as a protein folding chaperone. Core component of the major histocompatibility complex class I (MHC I) peptide loading complex where it functions as an essential folding chaperone for TAPBP. Through TAPBP, assists the dynamic assembly of the MHC I complex with high affinity antigens in the endoplasmic reticulum. Therefore, plays a crucial role in the presentation of antigens to cytotoxic T cells in adaptive immunity.</text>
</comment>
<comment type="catalytic activity">
    <reaction evidence="3">
        <text>Catalyzes the rearrangement of -S-S- bonds in proteins.</text>
        <dbReference type="EC" id="5.3.4.1"/>
    </reaction>
</comment>
<comment type="subunit">
    <text evidence="2 3">Part of the major histocompatibility complex class I (MHC I) peptide loading complex composed of TAP1, TAP2, B2M, MHC heavy chain, TAPBP, PDIA3, and CALR. Interacts with ERP27 and CANX. Interacts with SERPINA2 and with SERPINA1 (By similarity). Interacts with ATP2A2 (By similarity).</text>
</comment>
<comment type="subcellular location">
    <subcellularLocation>
        <location evidence="3">Endoplasmic reticulum</location>
    </subcellularLocation>
    <subcellularLocation>
        <location evidence="1">Endoplasmic reticulum lumen</location>
    </subcellularLocation>
    <subcellularLocation>
        <location evidence="3">Melanosome</location>
    </subcellularLocation>
</comment>
<comment type="tissue specificity">
    <text>Predominantly expressed in liver. Low in brain, testis and colon. Not detectable in pancreas and skeletal muscle.</text>
</comment>
<comment type="PTM">
    <text evidence="3">Within the major histocompatibility complex class I (MHC I) peptide loading complex forms reversible disulfide-linked heterodimers with TAPBP as part of its protein folding chaperone activity. This is essential to assist the dynamic assembly of the MHC I complex with high affinity antigens in the endoplasmic reticulum.</text>
</comment>
<comment type="PTM">
    <text evidence="2">Phosphorylated.</text>
</comment>
<comment type="similarity">
    <text evidence="4">Belongs to the protein disulfide isomerase family.</text>
</comment>
<reference key="1">
    <citation type="journal article" date="1998" name="Eur. J. Biochem.">
        <title>Purification of a 58-kDa protein (ER58) from monkey liver microsomes and comparison with protein-disulfide isomerase.</title>
        <authorList>
            <person name="Bonfils C."/>
        </authorList>
    </citation>
    <scope>PROTEIN SEQUENCE</scope>
    <source>
        <tissue>Hepatocyte</tissue>
    </source>
</reference>
<sequence>SDVLELTDDNFESRVSDTGSAGLVEFFAPDATANDVPSP</sequence>
<gene>
    <name type="primary">PDIA3</name>
    <name type="synonym">GRP58</name>
</gene>
<dbReference type="EC" id="5.3.4.1" evidence="3"/>
<dbReference type="SMR" id="P81246"/>
<dbReference type="GO" id="GO:0005783">
    <property type="term" value="C:endoplasmic reticulum"/>
    <property type="evidence" value="ECO:0000250"/>
    <property type="project" value="UniProtKB"/>
</dbReference>
<dbReference type="GO" id="GO:0005788">
    <property type="term" value="C:endoplasmic reticulum lumen"/>
    <property type="evidence" value="ECO:0007669"/>
    <property type="project" value="UniProtKB-SubCell"/>
</dbReference>
<dbReference type="GO" id="GO:0042470">
    <property type="term" value="C:melanosome"/>
    <property type="evidence" value="ECO:0007669"/>
    <property type="project" value="UniProtKB-SubCell"/>
</dbReference>
<dbReference type="GO" id="GO:0003756">
    <property type="term" value="F:protein disulfide isomerase activity"/>
    <property type="evidence" value="ECO:0007669"/>
    <property type="project" value="UniProtKB-EC"/>
</dbReference>
<dbReference type="GO" id="GO:0002250">
    <property type="term" value="P:adaptive immune response"/>
    <property type="evidence" value="ECO:0007669"/>
    <property type="project" value="UniProtKB-KW"/>
</dbReference>